<dbReference type="EMBL" id="U51921">
    <property type="protein sequence ID" value="AAB67488.1"/>
    <property type="molecule type" value="Genomic_DNA"/>
</dbReference>
<dbReference type="EMBL" id="BK006945">
    <property type="protein sequence ID" value="DAA09486.1"/>
    <property type="molecule type" value="Genomic_DNA"/>
</dbReference>
<dbReference type="PIR" id="S68480">
    <property type="entry name" value="S68480"/>
</dbReference>
<dbReference type="RefSeq" id="NP_013265.1">
    <property type="nucleotide sequence ID" value="NM_001182051.1"/>
</dbReference>
<dbReference type="SMR" id="Q06236"/>
<dbReference type="BioGRID" id="31437">
    <property type="interactions" value="47"/>
</dbReference>
<dbReference type="DIP" id="DIP-5582N"/>
<dbReference type="FunCoup" id="Q06236">
    <property type="interactions" value="295"/>
</dbReference>
<dbReference type="STRING" id="4932.YLR164W"/>
<dbReference type="PaxDb" id="4932-YLR164W"/>
<dbReference type="PeptideAtlas" id="Q06236"/>
<dbReference type="EnsemblFungi" id="YLR164W_mRNA">
    <property type="protein sequence ID" value="YLR164W"/>
    <property type="gene ID" value="YLR164W"/>
</dbReference>
<dbReference type="GeneID" id="850861"/>
<dbReference type="KEGG" id="sce:YLR164W"/>
<dbReference type="AGR" id="SGD:S000004154"/>
<dbReference type="SGD" id="S000004154">
    <property type="gene designation" value="SHH4"/>
</dbReference>
<dbReference type="VEuPathDB" id="FungiDB:YLR164W"/>
<dbReference type="eggNOG" id="KOG4097">
    <property type="taxonomic scope" value="Eukaryota"/>
</dbReference>
<dbReference type="GeneTree" id="ENSGT00940000176639"/>
<dbReference type="HOGENOM" id="CLU_096618_0_0_1"/>
<dbReference type="InParanoid" id="Q06236"/>
<dbReference type="OMA" id="HSCITDY"/>
<dbReference type="OrthoDB" id="18577at2759"/>
<dbReference type="BioCyc" id="YEAST:G3O-32294-MONOMER"/>
<dbReference type="BioGRID-ORCS" id="850861">
    <property type="hits" value="3 hits in 10 CRISPR screens"/>
</dbReference>
<dbReference type="ChiTaRS" id="SHH4">
    <property type="organism name" value="yeast"/>
</dbReference>
<dbReference type="PRO" id="PR:Q06236"/>
<dbReference type="Proteomes" id="UP000002311">
    <property type="component" value="Chromosome XII"/>
</dbReference>
<dbReference type="RNAct" id="Q06236">
    <property type="molecule type" value="protein"/>
</dbReference>
<dbReference type="GO" id="GO:0005743">
    <property type="term" value="C:mitochondrial inner membrane"/>
    <property type="evidence" value="ECO:0000314"/>
    <property type="project" value="SGD"/>
</dbReference>
<dbReference type="GO" id="GO:0005739">
    <property type="term" value="C:mitochondrion"/>
    <property type="evidence" value="ECO:0007005"/>
    <property type="project" value="SGD"/>
</dbReference>
<dbReference type="GO" id="GO:0045273">
    <property type="term" value="C:respiratory chain complex II (succinate dehydrogenase)"/>
    <property type="evidence" value="ECO:0000316"/>
    <property type="project" value="SGD"/>
</dbReference>
<dbReference type="GO" id="GO:0020037">
    <property type="term" value="F:heme binding"/>
    <property type="evidence" value="ECO:0000318"/>
    <property type="project" value="GO_Central"/>
</dbReference>
<dbReference type="GO" id="GO:0046872">
    <property type="term" value="F:metal ion binding"/>
    <property type="evidence" value="ECO:0007669"/>
    <property type="project" value="UniProtKB-KW"/>
</dbReference>
<dbReference type="GO" id="GO:0048039">
    <property type="term" value="F:ubiquinone binding"/>
    <property type="evidence" value="ECO:0000318"/>
    <property type="project" value="GO_Central"/>
</dbReference>
<dbReference type="GO" id="GO:0006121">
    <property type="term" value="P:mitochondrial electron transport, succinate to ubiquinone"/>
    <property type="evidence" value="ECO:0000316"/>
    <property type="project" value="SGD"/>
</dbReference>
<dbReference type="GO" id="GO:0006099">
    <property type="term" value="P:tricarboxylic acid cycle"/>
    <property type="evidence" value="ECO:0000318"/>
    <property type="project" value="GO_Central"/>
</dbReference>
<dbReference type="CDD" id="cd03496">
    <property type="entry name" value="SQR_TypeC_CybS"/>
    <property type="match status" value="1"/>
</dbReference>
<dbReference type="FunFam" id="1.20.1300.10:FF:000007">
    <property type="entry name" value="Succinate dehydrogenase [ubiquinone] cytochrome b small subunit"/>
    <property type="match status" value="1"/>
</dbReference>
<dbReference type="Gene3D" id="1.20.1300.10">
    <property type="entry name" value="Fumarate reductase/succinate dehydrogenase, transmembrane subunit"/>
    <property type="match status" value="1"/>
</dbReference>
<dbReference type="InterPro" id="IPR007992">
    <property type="entry name" value="CybS"/>
</dbReference>
<dbReference type="InterPro" id="IPR034804">
    <property type="entry name" value="SQR/QFR_C/D"/>
</dbReference>
<dbReference type="PANTHER" id="PTHR13337:SF5">
    <property type="entry name" value="MITOCHONDRIAL INNER MEMBRANE PROTEIN SHH4-RELATED"/>
    <property type="match status" value="1"/>
</dbReference>
<dbReference type="PANTHER" id="PTHR13337">
    <property type="entry name" value="SUCCINATE DEHYDROGENASE"/>
    <property type="match status" value="1"/>
</dbReference>
<dbReference type="Pfam" id="PF05328">
    <property type="entry name" value="CybS"/>
    <property type="match status" value="1"/>
</dbReference>
<dbReference type="SUPFAM" id="SSF81343">
    <property type="entry name" value="Fumarate reductase respiratory complex transmembrane subunits"/>
    <property type="match status" value="1"/>
</dbReference>
<organism>
    <name type="scientific">Saccharomyces cerevisiae (strain ATCC 204508 / S288c)</name>
    <name type="common">Baker's yeast</name>
    <dbReference type="NCBI Taxonomy" id="559292"/>
    <lineage>
        <taxon>Eukaryota</taxon>
        <taxon>Fungi</taxon>
        <taxon>Dikarya</taxon>
        <taxon>Ascomycota</taxon>
        <taxon>Saccharomycotina</taxon>
        <taxon>Saccharomycetes</taxon>
        <taxon>Saccharomycetales</taxon>
        <taxon>Saccharomycetaceae</taxon>
        <taxon>Saccharomyces</taxon>
    </lineage>
</organism>
<comment type="function">
    <text evidence="6">Homolog of SDH4, but seems not to be a stoichiometric subunit of either the succinate dehydrogenase (SDH) complex or the mitochondrial inner membrane translocase TIM22 complex.</text>
</comment>
<comment type="subunit">
    <text evidence="5">Interacts with SDH3.</text>
</comment>
<comment type="subcellular location">
    <subcellularLocation>
        <location evidence="4 5">Mitochondrion inner membrane</location>
        <topology evidence="3">Multi-pass membrane protein</topology>
    </subcellularLocation>
</comment>
<comment type="disruption phenotype">
    <text evidence="5">Does not affect SDH or TIM22 complex formation.</text>
</comment>
<comment type="similarity">
    <text evidence="7">Belongs to the CybS family.</text>
</comment>
<sequence>MSSTKFLKPLCRIRAFHTSIARSFTIPFLPKIPQKPGGVSGTANDSSYMPPESRAQGSYHWIVERGLSLAVLPLIAVPLVTTGPISTFTDTFLSLVLLGHCHIGFQSCIIDYISERVYGKVHHYAMYLLSLGSFLSFVGIYKLESQEAGLIASLKSLWDNKPVEKKRQ</sequence>
<name>SHH4_YEAST</name>
<evidence type="ECO:0000250" key="1">
    <source>
        <dbReference type="UniProtKB" id="P37298"/>
    </source>
</evidence>
<evidence type="ECO:0000250" key="2">
    <source>
        <dbReference type="UniProtKB" id="Q08749"/>
    </source>
</evidence>
<evidence type="ECO:0000255" key="3"/>
<evidence type="ECO:0000269" key="4">
    <source>
    </source>
</evidence>
<evidence type="ECO:0000269" key="5">
    <source>
    </source>
</evidence>
<evidence type="ECO:0000303" key="6">
    <source>
    </source>
</evidence>
<evidence type="ECO:0000305" key="7"/>
<evidence type="ECO:0000312" key="8">
    <source>
        <dbReference type="SGD" id="S000004154"/>
    </source>
</evidence>
<accession>Q06236</accession>
<accession>D6VYH0</accession>
<protein>
    <recommendedName>
        <fullName evidence="7">Mitochondrial inner membrane protein SHH4</fullName>
    </recommendedName>
    <alternativeName>
        <fullName evidence="6">SDH4 homolog</fullName>
    </alternativeName>
</protein>
<feature type="transit peptide" description="Mitochondrion" evidence="3">
    <location>
        <begin position="1"/>
        <end position="23"/>
    </location>
</feature>
<feature type="chain" id="PRO_0000268180" description="Mitochondrial inner membrane protein SHH4">
    <location>
        <begin position="24"/>
        <end position="168"/>
    </location>
</feature>
<feature type="topological domain" description="Mitochondrial matrix" evidence="2">
    <location>
        <begin position="24"/>
        <end position="65"/>
    </location>
</feature>
<feature type="transmembrane region" description="Helical" evidence="3">
    <location>
        <begin position="66"/>
        <end position="86"/>
    </location>
</feature>
<feature type="topological domain" description="Mitochondrial intermembrane" evidence="2">
    <location>
        <begin position="87"/>
        <end position="92"/>
    </location>
</feature>
<feature type="transmembrane region" description="Helical" evidence="3">
    <location>
        <begin position="93"/>
        <end position="113"/>
    </location>
</feature>
<feature type="topological domain" description="Mitochondrial matrix" evidence="2">
    <location>
        <begin position="114"/>
        <end position="120"/>
    </location>
</feature>
<feature type="transmembrane region" description="Helical" evidence="3">
    <location>
        <begin position="121"/>
        <end position="141"/>
    </location>
</feature>
<feature type="topological domain" description="Mitochondrial intermembrane" evidence="2">
    <location>
        <begin position="142"/>
        <end position="168"/>
    </location>
</feature>
<feature type="binding site" description="axial binding residue" evidence="1">
    <location>
        <position position="101"/>
    </location>
    <ligand>
        <name>heme</name>
        <dbReference type="ChEBI" id="CHEBI:30413"/>
    </ligand>
    <ligandPart>
        <name>Fe</name>
        <dbReference type="ChEBI" id="CHEBI:18248"/>
    </ligandPart>
</feature>
<feature type="binding site" evidence="1">
    <location>
        <position position="112"/>
    </location>
    <ligand>
        <name>a ubiquinone</name>
        <dbReference type="ChEBI" id="CHEBI:16389"/>
    </ligand>
</feature>
<proteinExistence type="evidence at protein level"/>
<reference key="1">
    <citation type="journal article" date="1997" name="Nature">
        <title>The nucleotide sequence of Saccharomyces cerevisiae chromosome XII.</title>
        <authorList>
            <person name="Johnston M."/>
            <person name="Hillier L.W."/>
            <person name="Riles L."/>
            <person name="Albermann K."/>
            <person name="Andre B."/>
            <person name="Ansorge W."/>
            <person name="Benes V."/>
            <person name="Brueckner M."/>
            <person name="Delius H."/>
            <person name="Dubois E."/>
            <person name="Duesterhoeft A."/>
            <person name="Entian K.-D."/>
            <person name="Floeth M."/>
            <person name="Goffeau A."/>
            <person name="Hebling U."/>
            <person name="Heumann K."/>
            <person name="Heuss-Neitzel D."/>
            <person name="Hilbert H."/>
            <person name="Hilger F."/>
            <person name="Kleine K."/>
            <person name="Koetter P."/>
            <person name="Louis E.J."/>
            <person name="Messenguy F."/>
            <person name="Mewes H.-W."/>
            <person name="Miosga T."/>
            <person name="Moestl D."/>
            <person name="Mueller-Auer S."/>
            <person name="Nentwich U."/>
            <person name="Obermaier B."/>
            <person name="Piravandi E."/>
            <person name="Pohl T.M."/>
            <person name="Portetelle D."/>
            <person name="Purnelle B."/>
            <person name="Rechmann S."/>
            <person name="Rieger M."/>
            <person name="Rinke M."/>
            <person name="Rose M."/>
            <person name="Scharfe M."/>
            <person name="Scherens B."/>
            <person name="Scholler P."/>
            <person name="Schwager C."/>
            <person name="Schwarz S."/>
            <person name="Underwood A.P."/>
            <person name="Urrestarazu L.A."/>
            <person name="Vandenbol M."/>
            <person name="Verhasselt P."/>
            <person name="Vierendeels F."/>
            <person name="Voet M."/>
            <person name="Volckaert G."/>
            <person name="Voss H."/>
            <person name="Wambutt R."/>
            <person name="Wedler E."/>
            <person name="Wedler H."/>
            <person name="Zimmermann F.K."/>
            <person name="Zollner A."/>
            <person name="Hani J."/>
            <person name="Hoheisel J.D."/>
        </authorList>
    </citation>
    <scope>NUCLEOTIDE SEQUENCE [LARGE SCALE GENOMIC DNA]</scope>
    <source>
        <strain>ATCC 204508 / S288c</strain>
    </source>
</reference>
<reference key="2">
    <citation type="journal article" date="2014" name="G3 (Bethesda)">
        <title>The reference genome sequence of Saccharomyces cerevisiae: Then and now.</title>
        <authorList>
            <person name="Engel S.R."/>
            <person name="Dietrich F.S."/>
            <person name="Fisk D.G."/>
            <person name="Binkley G."/>
            <person name="Balakrishnan R."/>
            <person name="Costanzo M.C."/>
            <person name="Dwight S.S."/>
            <person name="Hitz B.C."/>
            <person name="Karra K."/>
            <person name="Nash R.S."/>
            <person name="Weng S."/>
            <person name="Wong E.D."/>
            <person name="Lloyd P."/>
            <person name="Skrzypek M.S."/>
            <person name="Miyasato S.R."/>
            <person name="Simison M."/>
            <person name="Cherry J.M."/>
        </authorList>
    </citation>
    <scope>GENOME REANNOTATION</scope>
    <source>
        <strain>ATCC 204508 / S288c</strain>
    </source>
</reference>
<reference key="3">
    <citation type="journal article" date="2000" name="Mol. Biol. Cell">
        <title>Tim18p is a new component of the Tim54p-Tim22p translocon in the mitochondrial inner membrane.</title>
        <authorList>
            <person name="Kerscher O."/>
            <person name="Sepuri N.B."/>
            <person name="Jensen R.E."/>
        </authorList>
    </citation>
    <scope>SUBCELLULAR LOCATION</scope>
</reference>
<reference key="4">
    <citation type="journal article" date="2003" name="Proc. Natl. Acad. Sci. U.S.A.">
        <title>The proteome of Saccharomyces cerevisiae mitochondria.</title>
        <authorList>
            <person name="Sickmann A."/>
            <person name="Reinders J."/>
            <person name="Wagner Y."/>
            <person name="Joppich C."/>
            <person name="Zahedi R.P."/>
            <person name="Meyer H.E."/>
            <person name="Schoenfisch B."/>
            <person name="Perschil I."/>
            <person name="Chacinska A."/>
            <person name="Guiard B."/>
            <person name="Rehling P."/>
            <person name="Pfanner N."/>
            <person name="Meisinger C."/>
        </authorList>
    </citation>
    <scope>SUBCELLULAR LOCATION [LARGE SCALE ANALYSIS]</scope>
    <source>
        <strain>ATCC 76625 / YPH499</strain>
    </source>
</reference>
<reference key="5">
    <citation type="journal article" date="2011" name="Mol. Cell">
        <title>Dual function of Sdh3 in the respiratory chain and TIM22 protein translocase of the mitochondrial inner membrane.</title>
        <authorList>
            <person name="Gebert N."/>
            <person name="Gebert M."/>
            <person name="Oeljeklaus S."/>
            <person name="von der Malsburg K."/>
            <person name="Stroud D.A."/>
            <person name="Kulawiak B."/>
            <person name="Wirth C."/>
            <person name="Zahedi R.P."/>
            <person name="Dolezal P."/>
            <person name="Wiese S."/>
            <person name="Simon O."/>
            <person name="Schulze-Specking A."/>
            <person name="Truscott K.N."/>
            <person name="Sickmann A."/>
            <person name="Rehling P."/>
            <person name="Guiard B."/>
            <person name="Hunte C."/>
            <person name="Warscheid B."/>
            <person name="van der Laan M."/>
            <person name="Pfanner N."/>
            <person name="Wiedemann N."/>
        </authorList>
    </citation>
    <scope>SUBCELLULAR LOCATION</scope>
    <scope>INTERACTION WITH SDH3</scope>
    <scope>DISRUPTION PHENOTYPE</scope>
</reference>
<keyword id="KW-0349">Heme</keyword>
<keyword id="KW-0408">Iron</keyword>
<keyword id="KW-0472">Membrane</keyword>
<keyword id="KW-0479">Metal-binding</keyword>
<keyword id="KW-0496">Mitochondrion</keyword>
<keyword id="KW-0999">Mitochondrion inner membrane</keyword>
<keyword id="KW-1185">Reference proteome</keyword>
<keyword id="KW-0809">Transit peptide</keyword>
<keyword id="KW-0812">Transmembrane</keyword>
<keyword id="KW-1133">Transmembrane helix</keyword>
<gene>
    <name evidence="6" type="primary">SHH4</name>
    <name evidence="8" type="ordered locus">YLR164W</name>
</gene>